<organism>
    <name type="scientific">Ralstonia pickettii (strain 12J)</name>
    <dbReference type="NCBI Taxonomy" id="402626"/>
    <lineage>
        <taxon>Bacteria</taxon>
        <taxon>Pseudomonadati</taxon>
        <taxon>Pseudomonadota</taxon>
        <taxon>Betaproteobacteria</taxon>
        <taxon>Burkholderiales</taxon>
        <taxon>Burkholderiaceae</taxon>
        <taxon>Ralstonia</taxon>
    </lineage>
</organism>
<comment type="function">
    <text evidence="1">Methyltransferase required for the conversion of demethylmenaquinol (DMKH2) to menaquinol (MKH2) and the conversion of 2-polyprenyl-6-methoxy-1,4-benzoquinol (DDMQH2) to 2-polyprenyl-3-methyl-6-methoxy-1,4-benzoquinol (DMQH2).</text>
</comment>
<comment type="catalytic activity">
    <reaction evidence="1">
        <text>a 2-demethylmenaquinol + S-adenosyl-L-methionine = a menaquinol + S-adenosyl-L-homocysteine + H(+)</text>
        <dbReference type="Rhea" id="RHEA:42640"/>
        <dbReference type="Rhea" id="RHEA-COMP:9539"/>
        <dbReference type="Rhea" id="RHEA-COMP:9563"/>
        <dbReference type="ChEBI" id="CHEBI:15378"/>
        <dbReference type="ChEBI" id="CHEBI:18151"/>
        <dbReference type="ChEBI" id="CHEBI:55437"/>
        <dbReference type="ChEBI" id="CHEBI:57856"/>
        <dbReference type="ChEBI" id="CHEBI:59789"/>
        <dbReference type="EC" id="2.1.1.163"/>
    </reaction>
</comment>
<comment type="catalytic activity">
    <reaction evidence="1">
        <text>a 2-methoxy-6-(all-trans-polyprenyl)benzene-1,4-diol + S-adenosyl-L-methionine = a 5-methoxy-2-methyl-3-(all-trans-polyprenyl)benzene-1,4-diol + S-adenosyl-L-homocysteine + H(+)</text>
        <dbReference type="Rhea" id="RHEA:28286"/>
        <dbReference type="Rhea" id="RHEA-COMP:10858"/>
        <dbReference type="Rhea" id="RHEA-COMP:10859"/>
        <dbReference type="ChEBI" id="CHEBI:15378"/>
        <dbReference type="ChEBI" id="CHEBI:57856"/>
        <dbReference type="ChEBI" id="CHEBI:59789"/>
        <dbReference type="ChEBI" id="CHEBI:84166"/>
        <dbReference type="ChEBI" id="CHEBI:84167"/>
        <dbReference type="EC" id="2.1.1.201"/>
    </reaction>
</comment>
<comment type="pathway">
    <text evidence="1">Quinol/quinone metabolism; menaquinone biosynthesis; menaquinol from 1,4-dihydroxy-2-naphthoate: step 2/2.</text>
</comment>
<comment type="pathway">
    <text evidence="1">Cofactor biosynthesis; ubiquinone biosynthesis.</text>
</comment>
<comment type="similarity">
    <text evidence="1">Belongs to the class I-like SAM-binding methyltransferase superfamily. MenG/UbiE family.</text>
</comment>
<feature type="chain" id="PRO_1000187790" description="Ubiquinone/menaquinone biosynthesis C-methyltransferase UbiE">
    <location>
        <begin position="1"/>
        <end position="243"/>
    </location>
</feature>
<feature type="binding site" evidence="1">
    <location>
        <position position="69"/>
    </location>
    <ligand>
        <name>S-adenosyl-L-methionine</name>
        <dbReference type="ChEBI" id="CHEBI:59789"/>
    </ligand>
</feature>
<feature type="binding site" evidence="1">
    <location>
        <position position="90"/>
    </location>
    <ligand>
        <name>S-adenosyl-L-methionine</name>
        <dbReference type="ChEBI" id="CHEBI:59789"/>
    </ligand>
</feature>
<feature type="binding site" evidence="1">
    <location>
        <begin position="116"/>
        <end position="117"/>
    </location>
    <ligand>
        <name>S-adenosyl-L-methionine</name>
        <dbReference type="ChEBI" id="CHEBI:59789"/>
    </ligand>
</feature>
<evidence type="ECO:0000255" key="1">
    <source>
        <dbReference type="HAMAP-Rule" id="MF_01813"/>
    </source>
</evidence>
<reference key="1">
    <citation type="submission" date="2008-05" db="EMBL/GenBank/DDBJ databases">
        <title>Complete sequence of chromosome 1 of Ralstonia pickettii 12J.</title>
        <authorList>
            <person name="Lucas S."/>
            <person name="Copeland A."/>
            <person name="Lapidus A."/>
            <person name="Glavina del Rio T."/>
            <person name="Dalin E."/>
            <person name="Tice H."/>
            <person name="Bruce D."/>
            <person name="Goodwin L."/>
            <person name="Pitluck S."/>
            <person name="Meincke L."/>
            <person name="Brettin T."/>
            <person name="Detter J.C."/>
            <person name="Han C."/>
            <person name="Kuske C.R."/>
            <person name="Schmutz J."/>
            <person name="Larimer F."/>
            <person name="Land M."/>
            <person name="Hauser L."/>
            <person name="Kyrpides N."/>
            <person name="Mikhailova N."/>
            <person name="Marsh T."/>
            <person name="Richardson P."/>
        </authorList>
    </citation>
    <scope>NUCLEOTIDE SEQUENCE [LARGE SCALE GENOMIC DNA]</scope>
    <source>
        <strain>12J</strain>
    </source>
</reference>
<accession>B2UFG8</accession>
<dbReference type="EC" id="2.1.1.163" evidence="1"/>
<dbReference type="EC" id="2.1.1.201" evidence="1"/>
<dbReference type="EMBL" id="CP001068">
    <property type="protein sequence ID" value="ACD25491.1"/>
    <property type="molecule type" value="Genomic_DNA"/>
</dbReference>
<dbReference type="SMR" id="B2UFG8"/>
<dbReference type="STRING" id="402626.Rpic_0333"/>
<dbReference type="KEGG" id="rpi:Rpic_0333"/>
<dbReference type="eggNOG" id="COG2226">
    <property type="taxonomic scope" value="Bacteria"/>
</dbReference>
<dbReference type="HOGENOM" id="CLU_037990_0_0_4"/>
<dbReference type="UniPathway" id="UPA00079">
    <property type="reaction ID" value="UER00169"/>
</dbReference>
<dbReference type="UniPathway" id="UPA00232"/>
<dbReference type="GO" id="GO:0008425">
    <property type="term" value="F:2-methoxy-6-polyprenyl-1,4-benzoquinol methyltransferase activity"/>
    <property type="evidence" value="ECO:0007669"/>
    <property type="project" value="UniProtKB-UniRule"/>
</dbReference>
<dbReference type="GO" id="GO:0043770">
    <property type="term" value="F:demethylmenaquinone methyltransferase activity"/>
    <property type="evidence" value="ECO:0007669"/>
    <property type="project" value="UniProtKB-UniRule"/>
</dbReference>
<dbReference type="GO" id="GO:0009060">
    <property type="term" value="P:aerobic respiration"/>
    <property type="evidence" value="ECO:0007669"/>
    <property type="project" value="UniProtKB-UniRule"/>
</dbReference>
<dbReference type="GO" id="GO:0009234">
    <property type="term" value="P:menaquinone biosynthetic process"/>
    <property type="evidence" value="ECO:0007669"/>
    <property type="project" value="UniProtKB-UniRule"/>
</dbReference>
<dbReference type="GO" id="GO:0032259">
    <property type="term" value="P:methylation"/>
    <property type="evidence" value="ECO:0007669"/>
    <property type="project" value="UniProtKB-KW"/>
</dbReference>
<dbReference type="CDD" id="cd02440">
    <property type="entry name" value="AdoMet_MTases"/>
    <property type="match status" value="1"/>
</dbReference>
<dbReference type="Gene3D" id="3.40.50.150">
    <property type="entry name" value="Vaccinia Virus protein VP39"/>
    <property type="match status" value="1"/>
</dbReference>
<dbReference type="HAMAP" id="MF_01813">
    <property type="entry name" value="MenG_UbiE_methyltr"/>
    <property type="match status" value="1"/>
</dbReference>
<dbReference type="InterPro" id="IPR029063">
    <property type="entry name" value="SAM-dependent_MTases_sf"/>
</dbReference>
<dbReference type="InterPro" id="IPR004033">
    <property type="entry name" value="UbiE/COQ5_MeTrFase"/>
</dbReference>
<dbReference type="InterPro" id="IPR023576">
    <property type="entry name" value="UbiE/COQ5_MeTrFase_CS"/>
</dbReference>
<dbReference type="NCBIfam" id="TIGR01934">
    <property type="entry name" value="MenG_MenH_UbiE"/>
    <property type="match status" value="1"/>
</dbReference>
<dbReference type="NCBIfam" id="NF001240">
    <property type="entry name" value="PRK00216.1-1"/>
    <property type="match status" value="1"/>
</dbReference>
<dbReference type="PANTHER" id="PTHR43591:SF24">
    <property type="entry name" value="2-METHOXY-6-POLYPRENYL-1,4-BENZOQUINOL METHYLASE, MITOCHONDRIAL"/>
    <property type="match status" value="1"/>
</dbReference>
<dbReference type="PANTHER" id="PTHR43591">
    <property type="entry name" value="METHYLTRANSFERASE"/>
    <property type="match status" value="1"/>
</dbReference>
<dbReference type="Pfam" id="PF01209">
    <property type="entry name" value="Ubie_methyltran"/>
    <property type="match status" value="1"/>
</dbReference>
<dbReference type="SUPFAM" id="SSF53335">
    <property type="entry name" value="S-adenosyl-L-methionine-dependent methyltransferases"/>
    <property type="match status" value="1"/>
</dbReference>
<dbReference type="PROSITE" id="PS51608">
    <property type="entry name" value="SAM_MT_UBIE"/>
    <property type="match status" value="1"/>
</dbReference>
<dbReference type="PROSITE" id="PS01183">
    <property type="entry name" value="UBIE_1"/>
    <property type="match status" value="1"/>
</dbReference>
<dbReference type="PROSITE" id="PS01184">
    <property type="entry name" value="UBIE_2"/>
    <property type="match status" value="1"/>
</dbReference>
<gene>
    <name evidence="1" type="primary">ubiE</name>
    <name type="ordered locus">Rpic_0333</name>
</gene>
<proteinExistence type="inferred from homology"/>
<name>UBIE_RALPJ</name>
<sequence>MSQTHFGFQQVDEQEKAGKVAGVFHSVASKYDVMNDLMSGGLHRVWKMFTIAQAAVRPGYKVLDIAGGTGDLAKAFARQAGPTGEVWLTDINESMLRVGRDRLLDAGVLTPTALCDAEHIPFPNAYFDVVTVAFGLRNMTHKDRALAEMRRVVKPGGKVMVLEFSKVWQPLEKAYDVYSFKVLPWLGSKVAGDPESYRYLAESIRMHPDQETLKQMMEQAGLDSVEYFNLTAGVVALHVGRRL</sequence>
<protein>
    <recommendedName>
        <fullName evidence="1">Ubiquinone/menaquinone biosynthesis C-methyltransferase UbiE</fullName>
        <ecNumber evidence="1">2.1.1.163</ecNumber>
        <ecNumber evidence="1">2.1.1.201</ecNumber>
    </recommendedName>
    <alternativeName>
        <fullName evidence="1">2-methoxy-6-polyprenyl-1,4-benzoquinol methylase</fullName>
    </alternativeName>
    <alternativeName>
        <fullName evidence="1">Demethylmenaquinone methyltransferase</fullName>
    </alternativeName>
</protein>
<keyword id="KW-0474">Menaquinone biosynthesis</keyword>
<keyword id="KW-0489">Methyltransferase</keyword>
<keyword id="KW-0949">S-adenosyl-L-methionine</keyword>
<keyword id="KW-0808">Transferase</keyword>
<keyword id="KW-0831">Ubiquinone biosynthesis</keyword>